<gene>
    <name type="ORF">1a</name>
</gene>
<comment type="function">
    <molecule>Papain-like protease nsp3</molecule>
    <text evidence="24">Responsible for the cleavages located at the N-terminus of replicase polyprotein. In addition, PL-PRO possesses a deubiquitinating/deISGylating activity and processes both 'Lys-48'- and 'Lys-63'-linked polyubiquitin chains from cellular substrates. Antagonizes innate immune induction of type I interferon by blocking the phosphorylation, dimerization and subsequent nuclear translocation of host IRF-3.</text>
</comment>
<comment type="function">
    <molecule>3C-like proteinase nsp5</molecule>
    <text evidence="7">Responsible for the majority of cleavages as it cleaves the C-terminus of replicase polyprotein at 11 sites. Recognizes substrates containing the core sequence [ILMVF]-Q-|-[SGACN]. Inhibited by the substrate-analog Cbz-Val-Asn-Ser-Thr-Leu-Gln-CMK. Also contains an ADP-ribose-1''-phosphate (ADRP)-binding function (By similarity).</text>
</comment>
<comment type="function">
    <text evidence="1">Nsp7-nsp8 hexadecamer may possibly confer processivity to the polymerase, maybe by binding to dsRNA or by producing primers utilized by the latter.</text>
</comment>
<comment type="function">
    <molecule>Non-structural protein 1</molecule>
    <text evidence="24">Binds to the 40S ribosomal subunit and inhibits host translation. The nsp1-40S ribosome complex further induces an endonucleolytic cleavage near the 5'UTR of host mRNAs, targeting them for degradation. By suppressing host gene expression, nsp1 facilitates efficient viral gene expression in infected cells and evasion from host immune response.</text>
</comment>
<comment type="function">
    <molecule>RNA-capping enzyme subunit nsp9</molecule>
    <text evidence="2">Catalytic subunit of viral RNA capping enzyme which catalyzes the RNA guanylyltransferase reaction for genomic and sub-genomic RNAs. The kinase-like NiRAN domain of NSP12 transfers RNA to the amino terminus of NSP9, forming a covalent RNA-protein intermediate. Subsequently, the NiRAN domain transfers RNA to GDP, forming the core cap structure GpppA-RNA. The NSP14 and NSP16 methyltransferases then add methyl groups to form functional cap structures.</text>
</comment>
<comment type="catalytic activity">
    <molecule>Papain-like protease nsp3</molecule>
    <reaction evidence="2">
        <text>Thiol-dependent hydrolysis of ester, thioester, amide, peptide and isopeptide bonds formed by the C-terminal Gly of ubiquitin (a 76-residue protein attached to proteins as an intracellular targeting signal).</text>
        <dbReference type="EC" id="3.4.19.12"/>
    </reaction>
</comment>
<comment type="catalytic activity">
    <molecule>3C-like proteinase nsp5</molecule>
    <reaction evidence="2">
        <text>TSAVLQ-|-SGFRK-NH2 and SGVTFQ-|-GKFKK the two peptides corresponding to the two self-cleavage sites of the SARS 3C-like proteinase are the two most reactive peptide substrates. The enzyme exhibits a strong preference for substrates containing Gln at P1 position and Leu at P2 position.</text>
        <dbReference type="EC" id="3.4.22.69"/>
    </reaction>
</comment>
<comment type="catalytic activity">
    <molecule>RNA-capping enzyme subunit nsp9</molecule>
    <reaction evidence="2">
        <text>a 5'-end diphospho-ribonucleoside in mRNA + GTP + H(+) = a 5'-end (5'-triphosphoguanosine)-ribonucleoside in mRNA + diphosphate</text>
        <dbReference type="Rhea" id="RHEA:67012"/>
        <dbReference type="Rhea" id="RHEA-COMP:17165"/>
        <dbReference type="Rhea" id="RHEA-COMP:17166"/>
        <dbReference type="ChEBI" id="CHEBI:15378"/>
        <dbReference type="ChEBI" id="CHEBI:33019"/>
        <dbReference type="ChEBI" id="CHEBI:37565"/>
        <dbReference type="ChEBI" id="CHEBI:167616"/>
        <dbReference type="ChEBI" id="CHEBI:167617"/>
        <dbReference type="EC" id="2.7.7.50"/>
    </reaction>
    <physiologicalReaction direction="right-to-left" evidence="2">
        <dbReference type="Rhea" id="RHEA:67014"/>
    </physiologicalReaction>
</comment>
<comment type="subunit">
    <text evidence="1">3CL-PRO exists as monomer and homodimer. Eight copies of nsp7 and eight copies of nsp8 assemble to form a heterohexadecamer. Nsp9 is a dimer. Nsp10 forms a dodecamer (By similarity).</text>
</comment>
<comment type="subcellular location">
    <molecule>Papain-like protease nsp3</molecule>
    <subcellularLocation>
        <location evidence="25">Host membrane</location>
        <topology evidence="25">Multi-pass membrane protein</topology>
    </subcellularLocation>
</comment>
<comment type="subcellular location">
    <molecule>Non-structural protein 4</molecule>
    <subcellularLocation>
        <location evidence="25">Host membrane</location>
        <topology evidence="25">Multi-pass membrane protein</topology>
    </subcellularLocation>
</comment>
<comment type="subcellular location">
    <molecule>Non-structural protein 6</molecule>
    <subcellularLocation>
        <location evidence="25">Host membrane</location>
        <topology evidence="25">Multi-pass membrane protein</topology>
    </subcellularLocation>
</comment>
<comment type="subcellular location">
    <molecule>Non-structural protein 7</molecule>
    <subcellularLocation>
        <location evidence="1">Host cytoplasm</location>
        <location evidence="1">Host perinuclear region</location>
    </subcellularLocation>
    <text evidence="1">nsp7, nsp8, nsp9 and nsp10 are localized in cytoplasmic foci, largely perinuclear. Late in infection, they merge into confluent complexes (By similarity).</text>
</comment>
<comment type="subcellular location">
    <molecule>Non-structural protein 8</molecule>
    <subcellularLocation>
        <location evidence="1">Host cytoplasm</location>
        <location evidence="1">Host perinuclear region</location>
    </subcellularLocation>
    <text evidence="1">nsp7, nsp8, nsp9 and nsp10 are localized in cytoplasmic foci, largely perinuclear. Late in infection, they merge into confluent complexes (By similarity).</text>
</comment>
<comment type="subcellular location">
    <molecule>RNA-capping enzyme subunit nsp9</molecule>
    <subcellularLocation>
        <location evidence="1">Host cytoplasm</location>
        <location evidence="1">Host perinuclear region</location>
    </subcellularLocation>
    <text evidence="1">nsp7, nsp8, nsp9 and nsp10 are localized in cytoplasmic foci, largely perinuclear. Late in infection, they merge into confluent complexes (By similarity).</text>
</comment>
<comment type="subcellular location">
    <molecule>Non-structural protein 10</molecule>
    <subcellularLocation>
        <location evidence="1">Host cytoplasm</location>
        <location evidence="1">Host perinuclear region</location>
    </subcellularLocation>
    <text evidence="1">nsp7, nsp8, nsp9 and nsp10 are localized in cytoplasmic foci, largely perinuclear. Late in infection, they merge into confluent complexes (By similarity).</text>
</comment>
<comment type="alternative products">
    <event type="ribosomal frameshifting"/>
    <isoform>
        <id>P0C6F7-1</id>
        <name>Replicase polyprotein 1a</name>
        <name>pp1a</name>
        <name>ORF1a polyprotein</name>
        <sequence type="displayed"/>
    </isoform>
    <isoform>
        <id>P0C6W1-1</id>
        <name>Replicase polyprotein 1ab</name>
        <name>pp1ab</name>
        <sequence type="external"/>
    </isoform>
</comment>
<comment type="domain">
    <text evidence="1">The hydrophobic domains (HD) could mediate the membrane association of the replication complex and thereby alter the architecture of the host cell membrane.</text>
</comment>
<comment type="PTM">
    <text evidence="1">Specific enzymatic cleavages in vivo by its own proteases yield mature proteins. 3CL-PRO and PL-PRO proteinases are autocatalytically processed (By similarity).</text>
</comment>
<comment type="miscellaneous">
    <molecule>Isoform Replicase polyprotein 1a</molecule>
    <text>Produced by conventional translation.</text>
</comment>
<comment type="similarity">
    <text evidence="25">Belongs to the coronaviruses polyprotein 1ab family.</text>
</comment>
<sequence length="4441" mass="492464">MLSKAGVTTQGARGKYRAELYNEKRSDHVACTVPLCDTEDMASKLTPWFEDGETAFNQVSSILKEKGKILFVPMHMQRAMKFLPGPRVYLVERLTGGMLSKHFLVNQLAYKDHVGAAMMRTTLNVKPLGMFFPYDSSLETGEHTFLLRKNGLGGQLFRERPWDRKETPYVEILDDLEADPTGKYSQNLLKKLIGGDCIPVDQYMCGKNGKPIADYAKIVAKEGLTTLADIEVDVKSRMDSDRFIVLNKKLYRVVWNVTRRNVPYSKQTAFTVVSVIQCDDKESVPEHTFTIGSQILMVSPLKATNNKNFNLKQRLLHTFYGKEAVQQPGYIYHSAYVDCNACGRGTWCTGNAIQGFACDCGANYSANDVDLQSSGLVPKNALFLANCPCANNGACSHNAAQVYSILDGKACVEVGGKSFTLTFGGVVYAYMGCCDGTMYFVPRAKSCVSRIGDAIFTGCTGTWDKVVETANLFLEKAQHSLNFCQQFALTEVVLAILSGTTSTFEELRDLCHNASYEKVRDHLVNHGFVVTIGDYIRDAINIGANGVCNATINAPFIAFTGLGESFKKVAAIPWKICSNLKSALDYYCSNIMFRVFPYDIPCDVNDFVELLLDCGKLTVATSYFVLRYLDEKFDTVLGTVSNACQTALSSFLNACVAASRATAGFISDMFKLFKVLMHKLYVYTSCGYVAVAEHSSKIVQQVLDIMSKAMKLLHTNVSWAGTKLSAIIYEGREALLFNSGTYFCLSTKAKTLQDQMNLVLPGDYNKKTLGILDPVPNADTIDVTANSTVVDVVHGQLEPTNEHGPSMIVGNYVLVSDKLFVRTDDEEFYPLCINGKVVSTLFRLKGGMPSKKVTFGDVNTVEVTAYRSVSITYDIHPVLDALLSSSKLATFTVEKDLLVEDFVDVIKDEVLTLLTPLLRGYDIDGFDVEDFIDVPCYVYNQDGDCAWSSNMTFSINPVEDVEEVEEFIEDDYLSDELPIADDEEAWTRAVEEVMPLDDILVAEIELEEDLPLETALESVEAEVGESISDELCVVETAKAQEPSVESTDSTPSTSTVVSENDLSVKPMSRVAETGDVLEVETAVVGGPVSDVTASVVTNDIVSVEQAQQCGVSSLPIQDEASENQVHQVPDLQCTSETKVEIVQPRQDLRPRRLRKSKVDLSKYKHTVINNSVTLVLGDAIQIASLLPKCVLVNAANRHLKHGGGIAGAINKASGGDVQEESDEYISNSGPLHVGDSVLLKGYGLADAILRVVGPDARNNEDAALLKRCYKTFNKHTIVVTPLISSGIFSVDPKVSFEYLLANVTTTTYVVVNNEDIYNTLATPSKPDGLVYSFEGWRGTVRTAKNYGFTCFICTEYSANVKFLRTKGVDTTKKIQTVDGVSYYLYSARDALTDVIAAANGCPGICAMPFGYVTHGLDLAQSGNYVRQVKVPYVCLLASKEQIPIMNSDVAIQTPETAFINNVTSNGGYHSWHLVSGDLIVKDVCYKKLLHWSGQTICYADNKFYVVKNDVALPFSDLEACRAYLTSRAAQQVNIEVLVTIDGVNFRTVILNDATTFRKQLGATFYKGVDISDALPTVKMGGESLFVADNLSESEEVVLKEYYGTSDVTFLQRYYSLQPLVQQWKFVVHDGVKSLKLSNYNCYINATIMMIDMLHDIKFVVPALQNAYLRYKGGDPYDFLALIMAYGDCTFDNPDDEAKLLHTLLAKAELTVSAKMVWREWCTVCGIRDIEYTGMRACVYAGVNSMEELQSVFNETCVCGSVKHRQLVEHSTPWLLVSGLNEVKVSTSTDPVYRAFNVFQGVETSVGHYVHVRVKDGLFYKYDSGSLTKTSDMKCKMTSVWYPKVRYTADCNVVVYDLDGVTKVEVNPDLSNYYMKDGKYYTSKPTIKYSPATILPGSVYSNSCLVGVDGTPGSDTISKFFNDLLGFDETKPISKKLTYSLLPNEDGDVLLSEFNNYNPVYKKGVMLKGKPILWVNNGVCDSALNKPNRASLRQLYDVAPIVLDNKYTVLQDNTSQLIEPNVPVVEDVSITTRKLIEVKCKGLNKPFVKGNFSFVNDPNGVTVVDTLGLTELRALYVDINTRYIVLRDNNWSSLFKLHTVESGDLQIVANGGSVTRRARVLLGASSLFASFAKITVTATTAACKTAGRSFCKFVVNYGVLQNMFLFLKMLFFLPFNYLWPKKQPTVDVGVSGLRTAGVVTTNIVKQCGTAAYYMLLGKFKRVDWKATLRLFLLLCTTILLLSSIYHLVIFNQVLSSDVMLEDATGILAMYKEVRSYLGIRTLCDGLAVEYRNTSFDVVDFCSNRSVLCQWCLIGQDSLTRYSALQMLQTHITSYVLNIDWIWFALEFFLAYVLYTSSFNVLLLVVTAQYFFAYTSAFVNWRAYNYIVSGLFFLVTHIPLHGLVRVYNFLACLWFLRKFYSHVINGCKDTACLLCYKRNRLTRVEASTIVCGTKRTFYIAANGGTSYCCKHNWNCVECDTAGVGNTFICTEVANDLTTTLRRLIKPTDQSHYYVDSVVVKDAVVELHYNRDGSSCYERYPLCYFTNLEKLKFKEVCKTPTGIPEHNFLIYDTNDRGQENLARSACVYYSQVLCKPMLLVDVNLVTTVGDSREIAIKMLDSFINSFISLFSVSRDKLEKLINTARDCVRRGDDFQTVLKTFTDAARGHAGVESDVETTMVVDALQYAHKNDIQLTTECYNNYVPGYIKPDSINTLDLGCLIDLKAASVNQTSMRNANGACVWNSGDYMKLSDSFKRQIRIACRKCNIPFRLTTSKLRAADNILSVKFSATKIVGGAPSWLLRVRDLTVKGYCILTLFVFTVAVLSWFCLPSYSIATVNFNDDRILTYKVIENGIVRDIAPNDACFANKYGHFSKWFNENHGGVYRNSVDCPITIAVIAGVAGARVANVPATLAWVGRQIVLFVSRVFANTNVCFTPTNEIPYDTFSDSGCVLSSECTLFRDAEGNLNPFCYDPTVLPGASSYADMKPHVRYDMYDSDMYIKFPEVIFESTLRITKTLATQYCRFGSCEESAAGVCISTNGSWALYNQNYSTRPGIYCGDDYFDIVRRLAVSLFQPVTYFQLSTSLAMGLVLCVFLTAAFYYINKVKRALADYTQCAVVAVVAALLNSLCLCFIVANPLLVAPYTAMYYYATFYLTGEPAFIMHISWYVMFGTVVPIWMLASYTVGVMLRHLFWVLAYFSKKHVDVFTDGKLNCSFQDAASNIFVIGKDTYVALRNAITQDSFVRYLSLFNKYKYYSGAMDTASYREACAAHLCKALQTYSETGSDILYQPPNCSVTSSVLQSGLVKMSAPSGAVENCIVQVTCGSMTLNGLWLDNTVWCPRHIMCPADQLTDPNYDALLISKTNHSFIVQKHIGAQANLRVVAHSMVGVLLKLTVDVANPSTPAYTFSTVKPGASFSVLACYNGKPTGVFTVNLRHNSTIKGSFLCGSCGSVGYTENGGVLNFVYMHQMELSNGTHTGSSFDGVMYGAFEDKQTHQLQLTDKYCTINVVAWLYAAVLNGCKWFVKPTRVGIVTYNEWALSNQFTEFVGTQSIDMLAHRTGVSVEQMLAAIQSLHAGFQGKTILGQSTLEDEFTPDDVNMQVMGVVMQSGVKRISYGFMHWLMSTLVLAYVSVMQLTKFTMWTYLFETIPTQMTPLLFGFMACVMFTVKHKHTFLSLFLLPVALCLTYANIVYEPQTLVSSTLIAVANWLTPTSVYMRTTHLDFGLYISLSFVLAIIVRRLYRPSMSNLALALCSGVMWFYTYVIGDHSSPITYLMFITTLTSDYTITVFATVNLAKFISGLVFLYAPHLGFILPEVKLVLLIYLCLGYMCTMYFGVFSLLNLKLRVPLGVYDYSVSTQEFRFLTGNGLHAPRNSWEALILNFKLLGIGGTPCIKVATVQSKLTDLKCTSVVLLTVLQQLHLESNSKAWSYCVKLHNEILAAVDPTEAFERFVCLFATLMSFSANVDLDALANDLFENSSVLQATLTEFSHLATYAELETAQSSYQKALNSGDASPQVLKALQKAVNVAKNAYEKDKAVARKLERMAEQAMTSMYKQARAEDKKAKIVSAMQTMLFGMIKKLDNDVLNGVIANARNGCVPLSIVPLCASNKLRVVIPDISVWNKVVNWPSVSYAGSLWDVTVINNVDNEVVKPTDVVETNESLTWPLVIECSRASSSAVKLQNNEIHPKGLKTMVVTAGIDQVNCSSSAVAYYEPVQGHRMVMGLLSENAHLKWAKVEGKDGFINIELQPPCKFLIAGPKGPEIRYLYFVKNLNNLHRGQLLGHIAATVRLQAGANTEFASNSTVLTLVAFAVDPAKAYLDYVGSGGTPLSNYVKMLAPKTGTGVAISVKPEATADQETYGGASVCLYCRAHIEHPDVSGVCKYKTRFVQIPAHVRDPVGFLLKNVPCNVCQYWVGYGCNCDALRNNTVPQSKDTNFLNESGVLV</sequence>
<accession>P0C6F7</accession>
<accession>Q0Q4F3</accession>
<evidence type="ECO:0000250" key="1"/>
<evidence type="ECO:0000250" key="2">
    <source>
        <dbReference type="UniProtKB" id="P0DTC1"/>
    </source>
</evidence>
<evidence type="ECO:0000255" key="3"/>
<evidence type="ECO:0000255" key="4">
    <source>
        <dbReference type="PROSITE-ProRule" id="PRU00214"/>
    </source>
</evidence>
<evidence type="ECO:0000255" key="5">
    <source>
        <dbReference type="PROSITE-ProRule" id="PRU00444"/>
    </source>
</evidence>
<evidence type="ECO:0000255" key="6">
    <source>
        <dbReference type="PROSITE-ProRule" id="PRU00490"/>
    </source>
</evidence>
<evidence type="ECO:0000255" key="7">
    <source>
        <dbReference type="PROSITE-ProRule" id="PRU00772"/>
    </source>
</evidence>
<evidence type="ECO:0000255" key="8">
    <source>
        <dbReference type="PROSITE-ProRule" id="PRU01289"/>
    </source>
</evidence>
<evidence type="ECO:0000255" key="9">
    <source>
        <dbReference type="PROSITE-ProRule" id="PRU01290"/>
    </source>
</evidence>
<evidence type="ECO:0000255" key="10">
    <source>
        <dbReference type="PROSITE-ProRule" id="PRU01291"/>
    </source>
</evidence>
<evidence type="ECO:0000255" key="11">
    <source>
        <dbReference type="PROSITE-ProRule" id="PRU01294"/>
    </source>
</evidence>
<evidence type="ECO:0000255" key="12">
    <source>
        <dbReference type="PROSITE-ProRule" id="PRU01295"/>
    </source>
</evidence>
<evidence type="ECO:0000255" key="13">
    <source>
        <dbReference type="PROSITE-ProRule" id="PRU01296"/>
    </source>
</evidence>
<evidence type="ECO:0000255" key="14">
    <source>
        <dbReference type="PROSITE-ProRule" id="PRU01297"/>
    </source>
</evidence>
<evidence type="ECO:0000255" key="15">
    <source>
        <dbReference type="PROSITE-ProRule" id="PRU01307"/>
    </source>
</evidence>
<evidence type="ECO:0000255" key="16">
    <source>
        <dbReference type="PROSITE-ProRule" id="PRU01308"/>
    </source>
</evidence>
<evidence type="ECO:0000255" key="17">
    <source>
        <dbReference type="PROSITE-ProRule" id="PRU01333"/>
    </source>
</evidence>
<evidence type="ECO:0000255" key="18">
    <source>
        <dbReference type="PROSITE-ProRule" id="PRU01334"/>
    </source>
</evidence>
<evidence type="ECO:0000255" key="19">
    <source>
        <dbReference type="PROSITE-ProRule" id="PRU01335"/>
    </source>
</evidence>
<evidence type="ECO:0000255" key="20">
    <source>
        <dbReference type="PROSITE-ProRule" id="PRU01336"/>
    </source>
</evidence>
<evidence type="ECO:0000255" key="21">
    <source>
        <dbReference type="PROSITE-ProRule" id="PRU01337"/>
    </source>
</evidence>
<evidence type="ECO:0000255" key="22">
    <source>
        <dbReference type="PROSITE-ProRule" id="PRU01338"/>
    </source>
</evidence>
<evidence type="ECO:0000256" key="23">
    <source>
        <dbReference type="SAM" id="MobiDB-lite"/>
    </source>
</evidence>
<evidence type="ECO:0000269" key="24">
    <source>
    </source>
</evidence>
<evidence type="ECO:0000305" key="25"/>
<protein>
    <recommendedName>
        <fullName>Replicase polyprotein 1a</fullName>
        <shortName>pp1a</shortName>
    </recommendedName>
    <alternativeName>
        <fullName>ORF1a polyprotein</fullName>
    </alternativeName>
    <component>
        <recommendedName>
            <fullName>Non-structural protein 1</fullName>
            <shortName>nsp1</shortName>
        </recommendedName>
        <alternativeName>
            <fullName>Leader protein</fullName>
        </alternativeName>
    </component>
    <component>
        <recommendedName>
            <fullName>Non-structural protein 2</fullName>
            <shortName>nsp2</shortName>
        </recommendedName>
        <alternativeName>
            <fullName>p65 homolog</fullName>
        </alternativeName>
    </component>
    <component>
        <recommendedName>
            <fullName>Papain-like protease nsp3</fullName>
            <shortName>PL-PRO</shortName>
            <ecNumber>3.4.19.12</ecNumber>
            <ecNumber>3.4.22.-</ecNumber>
        </recommendedName>
        <alternativeName>
            <fullName>Non-structural protein 3</fullName>
            <shortName>nsp3</shortName>
        </alternativeName>
        <alternativeName>
            <fullName>PL2-PRO</fullName>
        </alternativeName>
    </component>
    <component>
        <recommendedName>
            <fullName>Non-structural protein 4</fullName>
            <shortName>nsp4</shortName>
        </recommendedName>
    </component>
    <component>
        <recommendedName>
            <fullName>3C-like proteinase nsp5</fullName>
            <shortName>3CL-PRO</shortName>
            <shortName>3CLp</shortName>
            <ecNumber>3.4.22.69</ecNumber>
        </recommendedName>
        <alternativeName>
            <fullName>nsp5</fullName>
        </alternativeName>
    </component>
    <component>
        <recommendedName>
            <fullName>Non-structural protein 6</fullName>
            <shortName>nsp6</shortName>
        </recommendedName>
    </component>
    <component>
        <recommendedName>
            <fullName>Non-structural protein 7</fullName>
            <shortName>nsp7</shortName>
        </recommendedName>
    </component>
    <component>
        <recommendedName>
            <fullName>Non-structural protein 8</fullName>
            <shortName>nsp8</shortName>
        </recommendedName>
    </component>
    <component>
        <recommendedName>
            <fullName>RNA-capping enzyme subunit nsp9</fullName>
        </recommendedName>
        <alternativeName>
            <fullName>Non-structural protein 9</fullName>
            <shortName>nsp9</shortName>
            <ecNumber>2.7.7.50</ecNumber>
        </alternativeName>
    </component>
    <component>
        <recommendedName>
            <fullName>Non-structural protein 10</fullName>
            <shortName>nsp10</shortName>
        </recommendedName>
        <alternativeName>
            <fullName>Growth factor-like peptide</fullName>
            <shortName>GFL</shortName>
        </alternativeName>
    </component>
    <component>
        <recommendedName>
            <fullName>Non-structural protein 11</fullName>
            <shortName>nsp11</shortName>
        </recommendedName>
    </component>
</protein>
<organismHost>
    <name type="scientific">Tylonycteris pachypus</name>
    <name type="common">Lesser bamboo bat</name>
    <name type="synonym">Vespertilio pachypus</name>
    <dbReference type="NCBI Taxonomy" id="258959"/>
</organismHost>
<keyword id="KW-1072">Activation of host autophagy by virus</keyword>
<keyword id="KW-1132">Decay of host mRNAs by virus</keyword>
<keyword id="KW-1015">Disulfide bond</keyword>
<keyword id="KW-0255">Endonuclease</keyword>
<keyword id="KW-1262">Eukaryotic host gene expression shutoff by virus</keyword>
<keyword id="KW-1193">Eukaryotic host translation shutoff by virus</keyword>
<keyword id="KW-1035">Host cytoplasm</keyword>
<keyword id="KW-1190">Host gene expression shutoff by virus</keyword>
<keyword id="KW-1043">Host membrane</keyword>
<keyword id="KW-1192">Host mRNA suppression by virus</keyword>
<keyword id="KW-0945">Host-virus interaction</keyword>
<keyword id="KW-0378">Hydrolase</keyword>
<keyword id="KW-1090">Inhibition of host innate immune response by virus</keyword>
<keyword id="KW-1114">Inhibition of host interferon signaling pathway by virus</keyword>
<keyword id="KW-1092">Inhibition of host IRF3 by virus</keyword>
<keyword id="KW-1095">Inhibition of host ISG15 by virus</keyword>
<keyword id="KW-1113">Inhibition of host RLR pathway by virus</keyword>
<keyword id="KW-0922">Interferon antiviral system evasion</keyword>
<keyword id="KW-0472">Membrane</keyword>
<keyword id="KW-0479">Metal-binding</keyword>
<keyword id="KW-0489">Methyltransferase</keyword>
<keyword id="KW-1127">Modulation of host ubiquitin pathway by viral deubiquitinase</keyword>
<keyword id="KW-1130">Modulation of host ubiquitin pathway by virus</keyword>
<keyword id="KW-0540">Nuclease</keyword>
<keyword id="KW-0645">Protease</keyword>
<keyword id="KW-0677">Repeat</keyword>
<keyword id="KW-0688">Ribosomal frameshifting</keyword>
<keyword id="KW-0694">RNA-binding</keyword>
<keyword id="KW-0788">Thiol protease</keyword>
<keyword id="KW-0808">Transferase</keyword>
<keyword id="KW-0812">Transmembrane</keyword>
<keyword id="KW-1133">Transmembrane helix</keyword>
<keyword id="KW-0833">Ubl conjugation pathway</keyword>
<keyword id="KW-0899">Viral immunoevasion</keyword>
<keyword id="KW-0862">Zinc</keyword>
<keyword id="KW-0863">Zinc-finger</keyword>
<proteinExistence type="inferred from homology"/>
<reference key="1">
    <citation type="journal article" date="2006" name="J. Virol.">
        <title>Prevalence and genetic diversity of coronaviruses in bats from China.</title>
        <authorList>
            <person name="Tang X.C."/>
            <person name="Zhang J.X."/>
            <person name="Zhang S.Y."/>
            <person name="Wang P."/>
            <person name="Fan X.H."/>
            <person name="Li L.F."/>
            <person name="Li G."/>
            <person name="Dong B.Q."/>
            <person name="Liu W."/>
            <person name="Cheung C.L."/>
            <person name="Xu K.M."/>
            <person name="Song W.J."/>
            <person name="Vijaykrishna D."/>
            <person name="Poon L.L.M."/>
            <person name="Peiris J.S.M."/>
            <person name="Smith G.J."/>
            <person name="Chen H."/>
            <person name="Guan Y."/>
        </authorList>
    </citation>
    <scope>NUCLEOTIDE SEQUENCE [GENOMIC RNA]</scope>
</reference>
<reference key="2">
    <citation type="journal article" date="2009" name="J. Virol.">
        <title>Suppression of host gene expression by nsp1 proteins of group 2 bat coronaviruses.</title>
        <authorList>
            <person name="Tohya Y."/>
            <person name="Narayanan K."/>
            <person name="Kamitani W."/>
            <person name="Huang C."/>
            <person name="Lokugamage K."/>
            <person name="Makino S."/>
        </authorList>
    </citation>
    <scope>FUNCTION OF NSP1</scope>
</reference>
<feature type="chain" id="PRO_0000338062" description="Replicase polyprotein 1a">
    <location>
        <begin position="1"/>
        <end position="4441"/>
    </location>
</feature>
<feature type="chain" id="PRO_0000338063" description="Non-structural protein 1" evidence="3">
    <location>
        <begin position="1"/>
        <end position="195"/>
    </location>
</feature>
<feature type="chain" id="PRO_0000338064" description="Non-structural protein 2" evidence="3">
    <location>
        <begin position="196"/>
        <end position="847"/>
    </location>
</feature>
<feature type="chain" id="PRO_0000338065" description="Papain-like protease nsp3" evidence="3">
    <location>
        <begin position="848"/>
        <end position="2791"/>
    </location>
</feature>
<feature type="chain" id="PRO_0000338066" description="Non-structural protein 4" evidence="3">
    <location>
        <begin position="2792"/>
        <end position="3298"/>
    </location>
</feature>
<feature type="chain" id="PRO_0000338067" description="3C-like proteinase nsp5" evidence="3">
    <location>
        <begin position="3299"/>
        <end position="3604"/>
    </location>
</feature>
<feature type="chain" id="PRO_0000338068" description="Non-structural protein 6" evidence="3">
    <location>
        <begin position="3605"/>
        <end position="3896"/>
    </location>
</feature>
<feature type="chain" id="PRO_0000338069" description="Non-structural protein 7" evidence="3">
    <location>
        <begin position="3897"/>
        <end position="3979"/>
    </location>
</feature>
<feature type="chain" id="PRO_0000338070" description="Non-structural protein 8" evidence="3">
    <location>
        <begin position="3980"/>
        <end position="4178"/>
    </location>
</feature>
<feature type="chain" id="PRO_0000338071" description="RNA-capping enzyme subunit nsp9" evidence="3">
    <location>
        <begin position="4179"/>
        <end position="4288"/>
    </location>
</feature>
<feature type="chain" id="PRO_0000338073" description="Non-structural protein 11" evidence="3">
    <location>
        <begin position="4288"/>
        <end position="4441"/>
    </location>
</feature>
<feature type="chain" id="PRO_0000338072" description="Non-structural protein 10" evidence="3">
    <location>
        <begin position="4289"/>
        <end position="4427"/>
    </location>
</feature>
<feature type="transmembrane region" description="Helical" evidence="3">
    <location>
        <begin position="2152"/>
        <end position="2172"/>
    </location>
</feature>
<feature type="transmembrane region" description="Helical" evidence="3">
    <location>
        <begin position="2229"/>
        <end position="2249"/>
    </location>
</feature>
<feature type="transmembrane region" description="Helical" evidence="3">
    <location>
        <begin position="2333"/>
        <end position="2353"/>
    </location>
</feature>
<feature type="transmembrane region" description="Helical" evidence="3">
    <location>
        <begin position="2357"/>
        <end position="2377"/>
    </location>
</feature>
<feature type="transmembrane region" description="Helical" evidence="3">
    <location>
        <begin position="2382"/>
        <end position="2402"/>
    </location>
</feature>
<feature type="transmembrane region" description="Helical" evidence="3">
    <location>
        <begin position="2807"/>
        <end position="2827"/>
    </location>
</feature>
<feature type="transmembrane region" description="Helical" evidence="3">
    <location>
        <begin position="3079"/>
        <end position="3099"/>
    </location>
</feature>
<feature type="transmembrane region" description="Helical" evidence="3">
    <location>
        <begin position="3112"/>
        <end position="3132"/>
    </location>
</feature>
<feature type="transmembrane region" description="Helical" evidence="3">
    <location>
        <begin position="3156"/>
        <end position="3176"/>
    </location>
</feature>
<feature type="transmembrane region" description="Helical" evidence="3">
    <location>
        <begin position="3610"/>
        <end position="3630"/>
    </location>
</feature>
<feature type="transmembrane region" description="Helical" evidence="3">
    <location>
        <begin position="3644"/>
        <end position="3664"/>
    </location>
</feature>
<feature type="transmembrane region" description="Helical" evidence="3">
    <location>
        <begin position="3669"/>
        <end position="3689"/>
    </location>
</feature>
<feature type="transmembrane region" description="Helical" evidence="3">
    <location>
        <begin position="3714"/>
        <end position="3734"/>
    </location>
</feature>
<feature type="transmembrane region" description="Helical" evidence="3">
    <location>
        <begin position="3742"/>
        <end position="3762"/>
    </location>
</feature>
<feature type="transmembrane region" description="Helical" evidence="3">
    <location>
        <begin position="3791"/>
        <end position="3811"/>
    </location>
</feature>
<feature type="transmembrane region" description="Helical" evidence="3">
    <location>
        <begin position="3815"/>
        <end position="3835"/>
    </location>
</feature>
<feature type="domain" description="CoV Nsp1 globular" evidence="15">
    <location>
        <begin position="25"/>
        <end position="151"/>
    </location>
</feature>
<feature type="domain" description="BetaCoV Nsp1 C-terminal" evidence="16">
    <location>
        <begin position="167"/>
        <end position="195"/>
    </location>
</feature>
<feature type="domain" description="CoV Nsp2 N-terminal" evidence="17">
    <location>
        <begin position="197"/>
        <end position="472"/>
    </location>
</feature>
<feature type="domain" description="CoV Nsp2 middle" evidence="18">
    <location>
        <begin position="478"/>
        <end position="712"/>
    </location>
</feature>
<feature type="domain" description="CoV Nsp2 C-terminal" evidence="19">
    <location>
        <begin position="714"/>
        <end position="847"/>
    </location>
</feature>
<feature type="domain" description="Ubiquitin-like 1" evidence="4">
    <location>
        <begin position="851"/>
        <end position="960"/>
    </location>
</feature>
<feature type="domain" description="Macro 1" evidence="6">
    <location>
        <begin position="1159"/>
        <end position="1328"/>
    </location>
</feature>
<feature type="domain" description="Macro 2" evidence="6">
    <location>
        <begin position="1329"/>
        <end position="1453"/>
    </location>
</feature>
<feature type="domain" description="DPUP" evidence="8">
    <location>
        <begin position="1453"/>
        <end position="1526"/>
    </location>
</feature>
<feature type="domain" description="Ubiquitin-like 2" evidence="4">
    <location>
        <begin position="1531"/>
        <end position="1586"/>
    </location>
</feature>
<feature type="domain" description="Peptidase C16" evidence="5">
    <location>
        <begin position="1600"/>
        <end position="1871"/>
    </location>
</feature>
<feature type="domain" description="Nucleic acid-binding" evidence="9">
    <location>
        <begin position="1885"/>
        <end position="2002"/>
    </location>
</feature>
<feature type="domain" description="G2M" evidence="22">
    <location>
        <begin position="2019"/>
        <end position="2140"/>
    </location>
</feature>
<feature type="domain" description="3Ecto" evidence="21">
    <location>
        <begin position="2266"/>
        <end position="2332"/>
    </location>
</feature>
<feature type="domain" description="CoV Nsp3 Y" evidence="20">
    <location>
        <begin position="2416"/>
        <end position="2789"/>
    </location>
</feature>
<feature type="domain" description="Nsp4C" evidence="10">
    <location>
        <begin position="3202"/>
        <end position="3298"/>
    </location>
</feature>
<feature type="domain" description="Peptidase C30" evidence="7">
    <location>
        <begin position="3299"/>
        <end position="3604"/>
    </location>
</feature>
<feature type="domain" description="RdRp Nsp7 cofactor" evidence="11">
    <location>
        <begin position="3897"/>
        <end position="3979"/>
    </location>
</feature>
<feature type="domain" description="RdRp Nsp8 cofactor" evidence="12">
    <location>
        <begin position="3980"/>
        <end position="4178"/>
    </location>
</feature>
<feature type="domain" description="Nsp9 ssRNA-binding" evidence="13">
    <location>
        <begin position="4179"/>
        <end position="4288"/>
    </location>
</feature>
<feature type="domain" description="ExoN/MTase coactivator" evidence="14">
    <location>
        <begin position="4289"/>
        <end position="4427"/>
    </location>
</feature>
<feature type="zinc finger region" description="C4-type" evidence="5">
    <location>
        <begin position="1721"/>
        <end position="1758"/>
    </location>
</feature>
<feature type="zinc finger region" evidence="1">
    <location>
        <begin position="4362"/>
        <end position="4378"/>
    </location>
</feature>
<feature type="zinc finger region" evidence="1">
    <location>
        <begin position="4404"/>
        <end position="4417"/>
    </location>
</feature>
<feature type="region of interest" description="C4" evidence="17">
    <location>
        <begin position="339"/>
        <end position="360"/>
    </location>
</feature>
<feature type="region of interest" description="Disordered" evidence="23">
    <location>
        <begin position="1039"/>
        <end position="1061"/>
    </location>
</feature>
<feature type="region of interest" description="HD1" evidence="1">
    <location>
        <begin position="2119"/>
        <end position="2402"/>
    </location>
</feature>
<feature type="region of interest" description="Y1" evidence="20">
    <location>
        <begin position="2416"/>
        <end position="2506"/>
    </location>
</feature>
<feature type="region of interest" description="ZF1" evidence="20">
    <location>
        <begin position="2420"/>
        <end position="2433"/>
    </location>
</feature>
<feature type="region of interest" description="ZF2" evidence="20">
    <location>
        <begin position="2466"/>
        <end position="2476"/>
    </location>
</feature>
<feature type="region of interest" description="CoV-Y" evidence="20">
    <location>
        <begin position="2507"/>
        <end position="2789"/>
    </location>
</feature>
<feature type="region of interest" description="Y2" evidence="20">
    <location>
        <begin position="2507"/>
        <end position="2605"/>
    </location>
</feature>
<feature type="region of interest" description="Y3" evidence="20">
    <location>
        <begin position="2606"/>
        <end position="2688"/>
    </location>
</feature>
<feature type="region of interest" description="Y4" evidence="20">
    <location>
        <begin position="2689"/>
        <end position="2789"/>
    </location>
</feature>
<feature type="region of interest" description="HD2" evidence="1">
    <location>
        <begin position="2807"/>
        <end position="3176"/>
    </location>
</feature>
<feature type="region of interest" description="HD3" evidence="1">
    <location>
        <begin position="3610"/>
        <end position="3835"/>
    </location>
</feature>
<feature type="compositionally biased region" description="Low complexity" evidence="23">
    <location>
        <begin position="1041"/>
        <end position="1059"/>
    </location>
</feature>
<feature type="active site" description="For PL-PRO activity" evidence="5">
    <location>
        <position position="1641"/>
    </location>
</feature>
<feature type="active site" description="For PL-PRO activity" evidence="5">
    <location>
        <position position="1807"/>
    </location>
</feature>
<feature type="active site" description="For PL-PRO activity" evidence="5">
    <location>
        <position position="1822"/>
    </location>
</feature>
<feature type="active site" description="For 3CL-PRO activity" evidence="7">
    <location>
        <position position="3339"/>
    </location>
</feature>
<feature type="active site" description="For 3CL-PRO activity" evidence="7">
    <location>
        <position position="3446"/>
    </location>
</feature>
<feature type="binding site" evidence="17">
    <location>
        <position position="339"/>
    </location>
    <ligand>
        <name>Zn(2+)</name>
        <dbReference type="ChEBI" id="CHEBI:29105"/>
        <label>1</label>
    </ligand>
</feature>
<feature type="binding site" evidence="17">
    <location>
        <position position="342"/>
    </location>
    <ligand>
        <name>Zn(2+)</name>
        <dbReference type="ChEBI" id="CHEBI:29105"/>
        <label>1</label>
    </ligand>
</feature>
<feature type="binding site" evidence="17">
    <location>
        <position position="358"/>
    </location>
    <ligand>
        <name>Zn(2+)</name>
        <dbReference type="ChEBI" id="CHEBI:29105"/>
        <label>1</label>
    </ligand>
</feature>
<feature type="binding site" evidence="17">
    <location>
        <position position="360"/>
    </location>
    <ligand>
        <name>Zn(2+)</name>
        <dbReference type="ChEBI" id="CHEBI:29105"/>
        <label>1</label>
    </ligand>
</feature>
<feature type="binding site" evidence="5">
    <location>
        <position position="1721"/>
    </location>
    <ligand>
        <name>Zn(2+)</name>
        <dbReference type="ChEBI" id="CHEBI:29105"/>
        <label>2</label>
    </ligand>
</feature>
<feature type="binding site" evidence="5">
    <location>
        <position position="1724"/>
    </location>
    <ligand>
        <name>Zn(2+)</name>
        <dbReference type="ChEBI" id="CHEBI:29105"/>
        <label>2</label>
    </ligand>
</feature>
<feature type="binding site" evidence="5">
    <location>
        <position position="1756"/>
    </location>
    <ligand>
        <name>Zn(2+)</name>
        <dbReference type="ChEBI" id="CHEBI:29105"/>
        <label>2</label>
    </ligand>
</feature>
<feature type="binding site" evidence="5">
    <location>
        <position position="1758"/>
    </location>
    <ligand>
        <name>Zn(2+)</name>
        <dbReference type="ChEBI" id="CHEBI:29105"/>
        <label>2</label>
    </ligand>
</feature>
<feature type="binding site" evidence="20">
    <location>
        <position position="2420"/>
    </location>
    <ligand>
        <name>Zn(2+)</name>
        <dbReference type="ChEBI" id="CHEBI:29105"/>
        <label>3</label>
    </ligand>
</feature>
<feature type="binding site" evidence="20">
    <location>
        <position position="2425"/>
    </location>
    <ligand>
        <name>Zn(2+)</name>
        <dbReference type="ChEBI" id="CHEBI:29105"/>
        <label>3</label>
    </ligand>
</feature>
<feature type="binding site" evidence="20">
    <location>
        <position position="2430"/>
    </location>
    <ligand>
        <name>Zn(2+)</name>
        <dbReference type="ChEBI" id="CHEBI:29105"/>
        <label>3</label>
    </ligand>
</feature>
<feature type="binding site" evidence="20">
    <location>
        <position position="2433"/>
    </location>
    <ligand>
        <name>Zn(2+)</name>
        <dbReference type="ChEBI" id="CHEBI:29105"/>
        <label>3</label>
    </ligand>
</feature>
<feature type="binding site" evidence="20">
    <location>
        <position position="2466"/>
    </location>
    <ligand>
        <name>Zn(2+)</name>
        <dbReference type="ChEBI" id="CHEBI:29105"/>
        <label>4</label>
    </ligand>
</feature>
<feature type="binding site" evidence="20">
    <location>
        <position position="2469"/>
    </location>
    <ligand>
        <name>Zn(2+)</name>
        <dbReference type="ChEBI" id="CHEBI:29105"/>
        <label>4</label>
    </ligand>
</feature>
<feature type="binding site" evidence="20">
    <location>
        <position position="2473"/>
    </location>
    <ligand>
        <name>Zn(2+)</name>
        <dbReference type="ChEBI" id="CHEBI:29105"/>
        <label>4</label>
    </ligand>
</feature>
<feature type="binding site" evidence="20">
    <location>
        <position position="2476"/>
    </location>
    <ligand>
        <name>Zn(2+)</name>
        <dbReference type="ChEBI" id="CHEBI:29105"/>
        <label>4</label>
    </ligand>
</feature>
<feature type="binding site" evidence="14">
    <location>
        <position position="4362"/>
    </location>
    <ligand>
        <name>Zn(2+)</name>
        <dbReference type="ChEBI" id="CHEBI:29105"/>
        <label>5</label>
    </ligand>
</feature>
<feature type="binding site" evidence="14">
    <location>
        <position position="4365"/>
    </location>
    <ligand>
        <name>Zn(2+)</name>
        <dbReference type="ChEBI" id="CHEBI:29105"/>
        <label>5</label>
    </ligand>
</feature>
<feature type="binding site" evidence="14">
    <location>
        <position position="4371"/>
    </location>
    <ligand>
        <name>Zn(2+)</name>
        <dbReference type="ChEBI" id="CHEBI:29105"/>
        <label>5</label>
    </ligand>
</feature>
<feature type="binding site" evidence="14">
    <location>
        <position position="4378"/>
    </location>
    <ligand>
        <name>Zn(2+)</name>
        <dbReference type="ChEBI" id="CHEBI:29105"/>
        <label>5</label>
    </ligand>
</feature>
<feature type="binding site" evidence="14">
    <location>
        <position position="4404"/>
    </location>
    <ligand>
        <name>Zn(2+)</name>
        <dbReference type="ChEBI" id="CHEBI:29105"/>
        <label>6</label>
    </ligand>
</feature>
<feature type="binding site" evidence="14">
    <location>
        <position position="4407"/>
    </location>
    <ligand>
        <name>Zn(2+)</name>
        <dbReference type="ChEBI" id="CHEBI:29105"/>
        <label>6</label>
    </ligand>
</feature>
<feature type="binding site" evidence="14">
    <location>
        <position position="4415"/>
    </location>
    <ligand>
        <name>Zn(2+)</name>
        <dbReference type="ChEBI" id="CHEBI:29105"/>
        <label>6</label>
    </ligand>
</feature>
<feature type="binding site" evidence="14">
    <location>
        <position position="4417"/>
    </location>
    <ligand>
        <name>Zn(2+)</name>
        <dbReference type="ChEBI" id="CHEBI:29105"/>
        <label>6</label>
    </ligand>
</feature>
<feature type="site" description="Cleavage" evidence="3">
    <location>
        <begin position="195"/>
        <end position="196"/>
    </location>
</feature>
<feature type="site" description="Cleavage; by PL-PRO" evidence="3">
    <location>
        <begin position="847"/>
        <end position="848"/>
    </location>
</feature>
<feature type="site" description="Cleavage; by PL-PRO" evidence="3">
    <location>
        <begin position="2791"/>
        <end position="2792"/>
    </location>
</feature>
<feature type="site" description="Cleavage; by 3CL-PRO" evidence="3">
    <location>
        <begin position="3298"/>
        <end position="3299"/>
    </location>
</feature>
<feature type="site" description="Cleavage; by 3CL-PRO" evidence="3">
    <location>
        <begin position="3604"/>
        <end position="3605"/>
    </location>
</feature>
<feature type="site" description="Cleavage; by 3CL-PRO" evidence="3">
    <location>
        <begin position="3896"/>
        <end position="3897"/>
    </location>
</feature>
<feature type="site" description="Cleavage; by 3CL-PRO" evidence="3">
    <location>
        <begin position="3979"/>
        <end position="3980"/>
    </location>
</feature>
<feature type="site" description="Cleavage; by 3CL-PRO" evidence="3">
    <location>
        <begin position="4178"/>
        <end position="4179"/>
    </location>
</feature>
<feature type="site" description="Cleavage; by 3CL-PRO" evidence="3">
    <location>
        <begin position="4288"/>
        <end position="4289"/>
    </location>
</feature>
<feature type="site" description="Cleavage; by 3CL-PRO" evidence="3">
    <location>
        <begin position="4427"/>
        <end position="4428"/>
    </location>
</feature>
<feature type="disulfide bond" evidence="21">
    <location>
        <begin position="2282"/>
        <end position="2310"/>
    </location>
</feature>
<feature type="disulfide bond" evidence="21">
    <location>
        <begin position="2300"/>
        <end position="2307"/>
    </location>
</feature>
<dbReference type="EC" id="3.4.19.12"/>
<dbReference type="EC" id="3.4.22.-"/>
<dbReference type="EC" id="3.4.22.69"/>
<dbReference type="EC" id="2.7.7.50"/>
<dbReference type="EMBL" id="DQ648794">
    <property type="status" value="NOT_ANNOTATED_CDS"/>
    <property type="molecule type" value="Genomic_RNA"/>
</dbReference>
<dbReference type="SMR" id="P0C6F7"/>
<dbReference type="Proteomes" id="UP000007449">
    <property type="component" value="Genome"/>
</dbReference>
<dbReference type="GO" id="GO:0033644">
    <property type="term" value="C:host cell membrane"/>
    <property type="evidence" value="ECO:0007669"/>
    <property type="project" value="UniProtKB-SubCell"/>
</dbReference>
<dbReference type="GO" id="GO:0044220">
    <property type="term" value="C:host cell perinuclear region of cytoplasm"/>
    <property type="evidence" value="ECO:0007669"/>
    <property type="project" value="UniProtKB-SubCell"/>
</dbReference>
<dbReference type="GO" id="GO:0016020">
    <property type="term" value="C:membrane"/>
    <property type="evidence" value="ECO:0007669"/>
    <property type="project" value="UniProtKB-KW"/>
</dbReference>
<dbReference type="GO" id="GO:0004843">
    <property type="term" value="F:cysteine-type deubiquitinase activity"/>
    <property type="evidence" value="ECO:0007669"/>
    <property type="project" value="UniProtKB-EC"/>
</dbReference>
<dbReference type="GO" id="GO:0004197">
    <property type="term" value="F:cysteine-type endopeptidase activity"/>
    <property type="evidence" value="ECO:0007669"/>
    <property type="project" value="InterPro"/>
</dbReference>
<dbReference type="GO" id="GO:0004519">
    <property type="term" value="F:endonuclease activity"/>
    <property type="evidence" value="ECO:0007669"/>
    <property type="project" value="UniProtKB-KW"/>
</dbReference>
<dbReference type="GO" id="GO:0002151">
    <property type="term" value="F:G-quadruplex RNA binding"/>
    <property type="evidence" value="ECO:0007669"/>
    <property type="project" value="InterPro"/>
</dbReference>
<dbReference type="GO" id="GO:0008168">
    <property type="term" value="F:methyltransferase activity"/>
    <property type="evidence" value="ECO:0007669"/>
    <property type="project" value="UniProtKB-KW"/>
</dbReference>
<dbReference type="GO" id="GO:0008242">
    <property type="term" value="F:omega peptidase activity"/>
    <property type="evidence" value="ECO:0007669"/>
    <property type="project" value="InterPro"/>
</dbReference>
<dbReference type="GO" id="GO:0003727">
    <property type="term" value="F:single-stranded RNA binding"/>
    <property type="evidence" value="ECO:0007669"/>
    <property type="project" value="InterPro"/>
</dbReference>
<dbReference type="GO" id="GO:0008270">
    <property type="term" value="F:zinc ion binding"/>
    <property type="evidence" value="ECO:0007669"/>
    <property type="project" value="UniProtKB-KW"/>
</dbReference>
<dbReference type="GO" id="GO:0032259">
    <property type="term" value="P:methylation"/>
    <property type="evidence" value="ECO:0007669"/>
    <property type="project" value="UniProtKB-KW"/>
</dbReference>
<dbReference type="GO" id="GO:0006508">
    <property type="term" value="P:proteolysis"/>
    <property type="evidence" value="ECO:0007669"/>
    <property type="project" value="UniProtKB-KW"/>
</dbReference>
<dbReference type="GO" id="GO:0010506">
    <property type="term" value="P:regulation of autophagy"/>
    <property type="evidence" value="ECO:0007669"/>
    <property type="project" value="InterPro"/>
</dbReference>
<dbReference type="GO" id="GO:0039520">
    <property type="term" value="P:symbiont-mediated activation of host autophagy"/>
    <property type="evidence" value="ECO:0007669"/>
    <property type="project" value="UniProtKB-KW"/>
</dbReference>
<dbReference type="GO" id="GO:0039595">
    <property type="term" value="P:symbiont-mediated degradation of host mRNA"/>
    <property type="evidence" value="ECO:0007669"/>
    <property type="project" value="UniProtKB-KW"/>
</dbReference>
<dbReference type="GO" id="GO:0039648">
    <property type="term" value="P:symbiont-mediated perturbation of host ubiquitin-like protein modification"/>
    <property type="evidence" value="ECO:0007669"/>
    <property type="project" value="UniProtKB-KW"/>
</dbReference>
<dbReference type="GO" id="GO:0039548">
    <property type="term" value="P:symbiont-mediated suppression of host cytoplasmic pattern recognition receptor signaling pathway via inhibition of IRF3 activity"/>
    <property type="evidence" value="ECO:0007669"/>
    <property type="project" value="UniProtKB-KW"/>
</dbReference>
<dbReference type="GO" id="GO:0039657">
    <property type="term" value="P:symbiont-mediated suppression of host gene expression"/>
    <property type="evidence" value="ECO:0007669"/>
    <property type="project" value="UniProtKB-KW"/>
</dbReference>
<dbReference type="GO" id="GO:0039579">
    <property type="term" value="P:symbiont-mediated suppression of host ISG15-protein conjugation"/>
    <property type="evidence" value="ECO:0007669"/>
    <property type="project" value="UniProtKB-KW"/>
</dbReference>
<dbReference type="GO" id="GO:0039502">
    <property type="term" value="P:symbiont-mediated suppression of host type I interferon-mediated signaling pathway"/>
    <property type="evidence" value="ECO:0007669"/>
    <property type="project" value="UniProtKB-KW"/>
</dbReference>
<dbReference type="GO" id="GO:0019079">
    <property type="term" value="P:viral genome replication"/>
    <property type="evidence" value="ECO:0007669"/>
    <property type="project" value="InterPro"/>
</dbReference>
<dbReference type="GO" id="GO:0019082">
    <property type="term" value="P:viral protein processing"/>
    <property type="evidence" value="ECO:0007669"/>
    <property type="project" value="InterPro"/>
</dbReference>
<dbReference type="GO" id="GO:0075523">
    <property type="term" value="P:viral translational frameshifting"/>
    <property type="evidence" value="ECO:0007669"/>
    <property type="project" value="UniProtKB-KW"/>
</dbReference>
<dbReference type="CDD" id="cd21901">
    <property type="entry name" value="alpha_betaCoV_Nsp10"/>
    <property type="match status" value="1"/>
</dbReference>
<dbReference type="CDD" id="cd21560">
    <property type="entry name" value="betaCoV-Nsp6"/>
    <property type="match status" value="1"/>
</dbReference>
<dbReference type="CDD" id="cd21666">
    <property type="entry name" value="betaCoV_Nsp5_Mpro"/>
    <property type="match status" value="1"/>
</dbReference>
<dbReference type="CDD" id="cd21827">
    <property type="entry name" value="betaCoV_Nsp7"/>
    <property type="match status" value="1"/>
</dbReference>
<dbReference type="CDD" id="cd21831">
    <property type="entry name" value="betaCoV_Nsp8"/>
    <property type="match status" value="1"/>
</dbReference>
<dbReference type="CDD" id="cd21898">
    <property type="entry name" value="betaCoV_Nsp9"/>
    <property type="match status" value="1"/>
</dbReference>
<dbReference type="CDD" id="cd21732">
    <property type="entry name" value="betaCoV_PLPro"/>
    <property type="match status" value="1"/>
</dbReference>
<dbReference type="CDD" id="cd21473">
    <property type="entry name" value="cv_Nsp4_TM"/>
    <property type="match status" value="1"/>
</dbReference>
<dbReference type="CDD" id="cd21563">
    <property type="entry name" value="Macro_cv_SUD-M_Nsp3-like"/>
    <property type="match status" value="1"/>
</dbReference>
<dbReference type="CDD" id="cd21557">
    <property type="entry name" value="Macro_X_Nsp3-like"/>
    <property type="match status" value="1"/>
</dbReference>
<dbReference type="CDD" id="cd21878">
    <property type="entry name" value="MERS-CoV-like_Nsp1"/>
    <property type="match status" value="1"/>
</dbReference>
<dbReference type="CDD" id="cd21815">
    <property type="entry name" value="MERS-CoV-like_Nsp3_betaSM"/>
    <property type="match status" value="1"/>
</dbReference>
<dbReference type="CDD" id="cd21823">
    <property type="entry name" value="MERS-CoV-like_Nsp3_NAB"/>
    <property type="match status" value="1"/>
</dbReference>
<dbReference type="CDD" id="cd21523">
    <property type="entry name" value="SUD_C_MERS-CoV_Nsp3"/>
    <property type="match status" value="1"/>
</dbReference>
<dbReference type="CDD" id="cd21716">
    <property type="entry name" value="TM_Y_MERS-CoV-like_Nsp3_C"/>
    <property type="match status" value="1"/>
</dbReference>
<dbReference type="CDD" id="cd21467">
    <property type="entry name" value="Ubl1_cv_Nsp3_N-like"/>
    <property type="match status" value="1"/>
</dbReference>
<dbReference type="FunFam" id="1.10.150.420:FF:000001">
    <property type="entry name" value="Replicase polyprotein"/>
    <property type="match status" value="1"/>
</dbReference>
<dbReference type="FunFam" id="2.40.10.10:FF:000045">
    <property type="entry name" value="Replicase polyprotein 1a"/>
    <property type="match status" value="1"/>
</dbReference>
<dbReference type="Gene3D" id="1.10.8.1190">
    <property type="match status" value="1"/>
</dbReference>
<dbReference type="Gene3D" id="2.60.120.1680">
    <property type="match status" value="1"/>
</dbReference>
<dbReference type="Gene3D" id="3.10.20.350">
    <property type="match status" value="1"/>
</dbReference>
<dbReference type="Gene3D" id="3.10.20.540">
    <property type="match status" value="1"/>
</dbReference>
<dbReference type="Gene3D" id="6.10.140.2090">
    <property type="match status" value="1"/>
</dbReference>
<dbReference type="Gene3D" id="1.10.150.420">
    <property type="entry name" value="Coronavirus nonstructural protein 4 C-terminus"/>
    <property type="match status" value="1"/>
</dbReference>
<dbReference type="Gene3D" id="3.40.220.10">
    <property type="entry name" value="Leucine Aminopeptidase, subunit E, domain 1"/>
    <property type="match status" value="1"/>
</dbReference>
<dbReference type="Gene3D" id="1.10.1840.10">
    <property type="entry name" value="main proteinase (3clpro) structure, domain 3"/>
    <property type="match status" value="1"/>
</dbReference>
<dbReference type="Gene3D" id="3.40.220.20">
    <property type="entry name" value="Nsp3, SUD-M subdomain"/>
    <property type="match status" value="1"/>
</dbReference>
<dbReference type="Gene3D" id="1.10.8.370">
    <property type="entry name" value="nsp7 replicase"/>
    <property type="match status" value="1"/>
</dbReference>
<dbReference type="Gene3D" id="3.30.70.3540">
    <property type="entry name" value="Nsp8 replicase, head domain"/>
    <property type="match status" value="1"/>
</dbReference>
<dbReference type="Gene3D" id="2.40.10.250">
    <property type="entry name" value="Replicase NSP9"/>
    <property type="match status" value="1"/>
</dbReference>
<dbReference type="Gene3D" id="3.40.50.11020">
    <property type="entry name" value="Replicase polyprotein, nucleic acid-binding domain"/>
    <property type="match status" value="1"/>
</dbReference>
<dbReference type="Gene3D" id="2.40.10.10">
    <property type="entry name" value="Trypsin-like serine proteases"/>
    <property type="match status" value="2"/>
</dbReference>
<dbReference type="InterPro" id="IPR046443">
    <property type="entry name" value="a/bCoV_NSP1_glob"/>
</dbReference>
<dbReference type="InterPro" id="IPR046442">
    <property type="entry name" value="bCoV_NSP1_C"/>
</dbReference>
<dbReference type="InterPro" id="IPR043613">
    <property type="entry name" value="CoV_NSP2_C"/>
</dbReference>
<dbReference type="InterPro" id="IPR047573">
    <property type="entry name" value="CoV_NSP2_M"/>
</dbReference>
<dbReference type="InterPro" id="IPR049894">
    <property type="entry name" value="COV_NSP3_3ECTO"/>
</dbReference>
<dbReference type="InterPro" id="IPR043611">
    <property type="entry name" value="CoV_NSP3_C"/>
</dbReference>
<dbReference type="InterPro" id="IPR047566">
    <property type="entry name" value="CoV_NSP3_Y"/>
</dbReference>
<dbReference type="InterPro" id="IPR032505">
    <property type="entry name" value="CoV_NSP4_C"/>
</dbReference>
<dbReference type="InterPro" id="IPR043612">
    <property type="entry name" value="CoV_NSP4_N"/>
</dbReference>
<dbReference type="InterPro" id="IPR022733">
    <property type="entry name" value="DPUP_SUD_C_bCoV"/>
</dbReference>
<dbReference type="InterPro" id="IPR002589">
    <property type="entry name" value="Macro_dom"/>
</dbReference>
<dbReference type="InterPro" id="IPR043472">
    <property type="entry name" value="Macro_dom-like"/>
</dbReference>
<dbReference type="InterPro" id="IPR044371">
    <property type="entry name" value="Macro_X_NSP3-like"/>
</dbReference>
<dbReference type="InterPro" id="IPR036333">
    <property type="entry name" value="NSP10_sf_CoV"/>
</dbReference>
<dbReference type="InterPro" id="IPR021590">
    <property type="entry name" value="NSP1_glob_bCoV"/>
</dbReference>
<dbReference type="InterPro" id="IPR043615">
    <property type="entry name" value="NSP2_N_CoV"/>
</dbReference>
<dbReference type="InterPro" id="IPR024375">
    <property type="entry name" value="NSP3_bCoV"/>
</dbReference>
<dbReference type="InterPro" id="IPR047567">
    <property type="entry name" value="NSP3_G2M_bCoV"/>
</dbReference>
<dbReference type="InterPro" id="IPR032592">
    <property type="entry name" value="NSP3_NAB_bCoV"/>
</dbReference>
<dbReference type="InterPro" id="IPR042570">
    <property type="entry name" value="NSP3_NAB_bCoV_sf"/>
</dbReference>
<dbReference type="InterPro" id="IPR038400">
    <property type="entry name" value="NSP3_SUD-M_sf_bCoV"/>
</dbReference>
<dbReference type="InterPro" id="IPR044382">
    <property type="entry name" value="NSP3_SUD_C_MERS-CoV"/>
</dbReference>
<dbReference type="InterPro" id="IPR044357">
    <property type="entry name" value="NSP3_Ubl1_dom_CoV"/>
</dbReference>
<dbReference type="InterPro" id="IPR044353">
    <property type="entry name" value="Nsp3_Ubl2_dom_CoV"/>
</dbReference>
<dbReference type="InterPro" id="IPR038083">
    <property type="entry name" value="NSP3A-like"/>
</dbReference>
<dbReference type="InterPro" id="IPR038123">
    <property type="entry name" value="NSP4_C_sf_CoV"/>
</dbReference>
<dbReference type="InterPro" id="IPR044367">
    <property type="entry name" value="NSP6_betaCoV"/>
</dbReference>
<dbReference type="InterPro" id="IPR043610">
    <property type="entry name" value="NSP6_CoV"/>
</dbReference>
<dbReference type="InterPro" id="IPR014828">
    <property type="entry name" value="NSP7_CoV"/>
</dbReference>
<dbReference type="InterPro" id="IPR037204">
    <property type="entry name" value="NSP7_sf_CoV"/>
</dbReference>
<dbReference type="InterPro" id="IPR014829">
    <property type="entry name" value="NSP8_CoV"/>
</dbReference>
<dbReference type="InterPro" id="IPR037230">
    <property type="entry name" value="NSP8_sf_CoV"/>
</dbReference>
<dbReference type="InterPro" id="IPR014822">
    <property type="entry name" value="NSP9_CoV"/>
</dbReference>
<dbReference type="InterPro" id="IPR036499">
    <property type="entry name" value="NSP9_sf_CoV"/>
</dbReference>
<dbReference type="InterPro" id="IPR013016">
    <property type="entry name" value="Peptidase_C16_CoV"/>
</dbReference>
<dbReference type="InterPro" id="IPR008740">
    <property type="entry name" value="Peptidase_C30_CoV"/>
</dbReference>
<dbReference type="InterPro" id="IPR043477">
    <property type="entry name" value="Peptidase_C30_dom3_CoV"/>
</dbReference>
<dbReference type="InterPro" id="IPR009003">
    <property type="entry name" value="Peptidase_S1_PA"/>
</dbReference>
<dbReference type="InterPro" id="IPR043504">
    <property type="entry name" value="Peptidase_S1_PA_chymotrypsin"/>
</dbReference>
<dbReference type="InterPro" id="IPR043177">
    <property type="entry name" value="PLpro_N_sf_CoV"/>
</dbReference>
<dbReference type="InterPro" id="IPR043503">
    <property type="entry name" value="PLpro_palm_finger_dom_CoV"/>
</dbReference>
<dbReference type="InterPro" id="IPR043178">
    <property type="entry name" value="PLpro_thumb_sf_CoV"/>
</dbReference>
<dbReference type="InterPro" id="IPR018995">
    <property type="entry name" value="RNA_synth_NSP10_CoV"/>
</dbReference>
<dbReference type="Pfam" id="PF16251">
    <property type="entry name" value="bCoV_NAB"/>
    <property type="match status" value="1"/>
</dbReference>
<dbReference type="Pfam" id="PF11501">
    <property type="entry name" value="bCoV_NSP1"/>
    <property type="match status" value="1"/>
</dbReference>
<dbReference type="Pfam" id="PF11633">
    <property type="entry name" value="bCoV_SUD_M"/>
    <property type="match status" value="1"/>
</dbReference>
<dbReference type="Pfam" id="PF09401">
    <property type="entry name" value="CoV_NSP10"/>
    <property type="match status" value="1"/>
</dbReference>
<dbReference type="Pfam" id="PF19212">
    <property type="entry name" value="CoV_NSP2_C"/>
    <property type="match status" value="1"/>
</dbReference>
<dbReference type="Pfam" id="PF19211">
    <property type="entry name" value="CoV_NSP2_N"/>
    <property type="match status" value="1"/>
</dbReference>
<dbReference type="Pfam" id="PF19218">
    <property type="entry name" value="CoV_NSP3_C"/>
    <property type="match status" value="1"/>
</dbReference>
<dbReference type="Pfam" id="PF16348">
    <property type="entry name" value="CoV_NSP4_C"/>
    <property type="match status" value="1"/>
</dbReference>
<dbReference type="Pfam" id="PF19217">
    <property type="entry name" value="CoV_NSP4_N"/>
    <property type="match status" value="1"/>
</dbReference>
<dbReference type="Pfam" id="PF19213">
    <property type="entry name" value="CoV_NSP6"/>
    <property type="match status" value="1"/>
</dbReference>
<dbReference type="Pfam" id="PF08716">
    <property type="entry name" value="CoV_NSP7"/>
    <property type="match status" value="1"/>
</dbReference>
<dbReference type="Pfam" id="PF08717">
    <property type="entry name" value="CoV_NSP8"/>
    <property type="match status" value="1"/>
</dbReference>
<dbReference type="Pfam" id="PF08710">
    <property type="entry name" value="CoV_NSP9"/>
    <property type="match status" value="1"/>
</dbReference>
<dbReference type="Pfam" id="PF08715">
    <property type="entry name" value="CoV_peptidase"/>
    <property type="match status" value="1"/>
</dbReference>
<dbReference type="Pfam" id="PF01661">
    <property type="entry name" value="Macro"/>
    <property type="match status" value="1"/>
</dbReference>
<dbReference type="Pfam" id="PF05409">
    <property type="entry name" value="Peptidase_C30"/>
    <property type="match status" value="1"/>
</dbReference>
<dbReference type="SMART" id="SM00506">
    <property type="entry name" value="A1pp"/>
    <property type="match status" value="1"/>
</dbReference>
<dbReference type="SUPFAM" id="SSF144246">
    <property type="entry name" value="Coronavirus NSP10-like"/>
    <property type="match status" value="1"/>
</dbReference>
<dbReference type="SUPFAM" id="SSF140367">
    <property type="entry name" value="Coronavirus NSP7-like"/>
    <property type="match status" value="1"/>
</dbReference>
<dbReference type="SUPFAM" id="SSF143076">
    <property type="entry name" value="Coronavirus NSP8-like"/>
    <property type="match status" value="1"/>
</dbReference>
<dbReference type="SUPFAM" id="SSF52949">
    <property type="entry name" value="Macro domain-like"/>
    <property type="match status" value="1"/>
</dbReference>
<dbReference type="SUPFAM" id="SSF159936">
    <property type="entry name" value="NSP3A-like"/>
    <property type="match status" value="1"/>
</dbReference>
<dbReference type="SUPFAM" id="SSF101816">
    <property type="entry name" value="Replicase NSP9"/>
    <property type="match status" value="1"/>
</dbReference>
<dbReference type="SUPFAM" id="SSF50494">
    <property type="entry name" value="Trypsin-like serine proteases"/>
    <property type="match status" value="1"/>
</dbReference>
<dbReference type="PROSITE" id="PS51963">
    <property type="entry name" value="BCOV_NSP1_C"/>
    <property type="match status" value="1"/>
</dbReference>
<dbReference type="PROSITE" id="PS51942">
    <property type="entry name" value="BCOV_NSP3C_C"/>
    <property type="match status" value="1"/>
</dbReference>
<dbReference type="PROSITE" id="PS51941">
    <property type="entry name" value="BCOV_NSP3C_M"/>
    <property type="match status" value="1"/>
</dbReference>
<dbReference type="PROSITE" id="PS51994">
    <property type="entry name" value="BCOV_NSP3E_G2M"/>
    <property type="match status" value="1"/>
</dbReference>
<dbReference type="PROSITE" id="PS51945">
    <property type="entry name" value="BCOV_NSP3E_NAB"/>
    <property type="match status" value="1"/>
</dbReference>
<dbReference type="PROSITE" id="PS51993">
    <property type="entry name" value="COV_3ECTO"/>
    <property type="match status" value="1"/>
</dbReference>
<dbReference type="PROSITE" id="PS51952">
    <property type="entry name" value="COV_EXON_MTASE_COACT"/>
    <property type="match status" value="1"/>
</dbReference>
<dbReference type="PROSITE" id="PS51962">
    <property type="entry name" value="COV_NSP1"/>
    <property type="match status" value="1"/>
</dbReference>
<dbReference type="PROSITE" id="PS51991">
    <property type="entry name" value="COV_NSP2_C"/>
    <property type="match status" value="1"/>
</dbReference>
<dbReference type="PROSITE" id="PS51990">
    <property type="entry name" value="COV_NSP2_M"/>
    <property type="match status" value="1"/>
</dbReference>
<dbReference type="PROSITE" id="PS51989">
    <property type="entry name" value="COV_NSP2_N"/>
    <property type="match status" value="1"/>
</dbReference>
<dbReference type="PROSITE" id="PS51992">
    <property type="entry name" value="COV_NSP3_Y"/>
    <property type="match status" value="1"/>
</dbReference>
<dbReference type="PROSITE" id="PS51943">
    <property type="entry name" value="COV_NSP3A_UBL"/>
    <property type="match status" value="1"/>
</dbReference>
<dbReference type="PROSITE" id="PS51944">
    <property type="entry name" value="COV_NSP3D_UBL"/>
    <property type="match status" value="1"/>
</dbReference>
<dbReference type="PROSITE" id="PS51946">
    <property type="entry name" value="COV_NSP4C"/>
    <property type="match status" value="1"/>
</dbReference>
<dbReference type="PROSITE" id="PS51949">
    <property type="entry name" value="COV_NSP7"/>
    <property type="match status" value="1"/>
</dbReference>
<dbReference type="PROSITE" id="PS51950">
    <property type="entry name" value="COV_NSP8"/>
    <property type="match status" value="1"/>
</dbReference>
<dbReference type="PROSITE" id="PS51951">
    <property type="entry name" value="COV_NSP9_SSRNA_BD"/>
    <property type="match status" value="1"/>
</dbReference>
<dbReference type="PROSITE" id="PS51442">
    <property type="entry name" value="M_PRO"/>
    <property type="match status" value="1"/>
</dbReference>
<dbReference type="PROSITE" id="PS51154">
    <property type="entry name" value="MACRO"/>
    <property type="match status" value="1"/>
</dbReference>
<dbReference type="PROSITE" id="PS51124">
    <property type="entry name" value="PEPTIDASE_C16"/>
    <property type="match status" value="1"/>
</dbReference>
<organism>
    <name type="scientific">Bat coronavirus 133/2005</name>
    <name type="common">BtCoV</name>
    <name type="synonym">BtCoV/133/2005</name>
    <dbReference type="NCBI Taxonomy" id="389230"/>
    <lineage>
        <taxon>Viruses</taxon>
        <taxon>Riboviria</taxon>
        <taxon>Orthornavirae</taxon>
        <taxon>Pisuviricota</taxon>
        <taxon>Pisoniviricetes</taxon>
        <taxon>Nidovirales</taxon>
        <taxon>Cornidovirineae</taxon>
        <taxon>Coronaviridae</taxon>
        <taxon>Orthocoronavirinae</taxon>
        <taxon>Betacoronavirus</taxon>
        <taxon>Merbecovirus</taxon>
        <taxon>Bat coronavirus HKU4</taxon>
    </lineage>
</organism>
<name>R1A_BC133</name>